<feature type="chain" id="PRO_0000077218" description="Large ribosomal subunit protein uL3">
    <location>
        <begin position="1"/>
        <end position="365"/>
    </location>
</feature>
<feature type="region of interest" description="Disordered" evidence="2">
    <location>
        <begin position="343"/>
        <end position="365"/>
    </location>
</feature>
<feature type="compositionally biased region" description="Polar residues" evidence="2">
    <location>
        <begin position="354"/>
        <end position="365"/>
    </location>
</feature>
<gene>
    <name evidence="1" type="primary">rpl3</name>
    <name type="ordered locus">PF1825</name>
</gene>
<evidence type="ECO:0000255" key="1">
    <source>
        <dbReference type="HAMAP-Rule" id="MF_01325"/>
    </source>
</evidence>
<evidence type="ECO:0000256" key="2">
    <source>
        <dbReference type="SAM" id="MobiDB-lite"/>
    </source>
</evidence>
<evidence type="ECO:0000269" key="3">
    <source>
    </source>
</evidence>
<evidence type="ECO:0007744" key="4">
    <source>
        <dbReference type="PDB" id="4V6U"/>
    </source>
</evidence>
<accession>Q8TZZ8</accession>
<keyword id="KW-0002">3D-structure</keyword>
<keyword id="KW-1185">Reference proteome</keyword>
<keyword id="KW-0687">Ribonucleoprotein</keyword>
<keyword id="KW-0689">Ribosomal protein</keyword>
<keyword id="KW-0694">RNA-binding</keyword>
<keyword id="KW-0699">rRNA-binding</keyword>
<reference key="1">
    <citation type="journal article" date="1999" name="Genetics">
        <title>Divergence of the hyperthermophilic archaea Pyrococcus furiosus and P. horikoshii inferred from complete genomic sequences.</title>
        <authorList>
            <person name="Maeder D.L."/>
            <person name="Weiss R.B."/>
            <person name="Dunn D.M."/>
            <person name="Cherry J.L."/>
            <person name="Gonzalez J.M."/>
            <person name="DiRuggiero J."/>
            <person name="Robb F.T."/>
        </authorList>
    </citation>
    <scope>NUCLEOTIDE SEQUENCE [LARGE SCALE GENOMIC DNA]</scope>
    <source>
        <strain>ATCC 43587 / DSM 3638 / JCM 8422 / Vc1</strain>
    </source>
</reference>
<reference evidence="4" key="2">
    <citation type="journal article" date="2013" name="Nucleic Acids Res.">
        <title>Promiscuous behaviour of archaeal ribosomal proteins: implications for eukaryotic ribosome evolution.</title>
        <authorList>
            <person name="Armache J.P."/>
            <person name="Anger A.M."/>
            <person name="Marquez V."/>
            <person name="Franckenberg S."/>
            <person name="Frohlich T."/>
            <person name="Villa E."/>
            <person name="Berninghausen O."/>
            <person name="Thomm M."/>
            <person name="Arnold G.J."/>
            <person name="Beckmann R."/>
            <person name="Wilson D.N."/>
        </authorList>
    </citation>
    <scope>STRUCTURE BY ELECTRON MICROSCOPY (6.60 ANGSTROMS) IN THE 70S RIBOSOME</scope>
    <scope>SUBUNIT</scope>
</reference>
<comment type="function">
    <text evidence="1">One of the primary rRNA binding proteins, it binds directly near the 3'-end of the 23S rRNA, where it nucleates assembly of the 50S subunit.</text>
</comment>
<comment type="subunit">
    <text evidence="1 3">Part of the 50S ribosomal subunit (PubMed:23222135). Forms a cluster with proteins L14 and L24e.</text>
</comment>
<comment type="similarity">
    <text evidence="1">Belongs to the universal ribosomal protein uL3 family.</text>
</comment>
<name>RL3_PYRFU</name>
<sequence length="365" mass="41390">MGKVHRPRRGSLGFSPRKRAKSIVPRIRSWPKETEVRMLGFAGYKAGMTHILMIDDEPGLTNGKEIFMPVTIIETPPLRVFGIRAYRMGYLGLETATEVIVPDFPLDNYPAKERKGKPKPKMTFYKLLERRIATLPKNYTQEMFEQKLGQLEDMIKEGEIVDVRAIVATQPWVIKLKKKPEVMEYAIGGTSVEEKFNYIKEKLGKELRVGEVLKEGELLDVIAVTKGKGTQGPVKRWGIKLRAHKDSKGRRKVGSIGPWHPARVMWTVPMAGQMGFHHRTELNKRLIAIGENGKLKLDENTEIEITPKGGFPHYGIVRSDFMMIAGSVPGAIKRIIRVRPAIRPPKKKPPVQRPQITYVSVESKQ</sequence>
<proteinExistence type="evidence at protein level"/>
<protein>
    <recommendedName>
        <fullName evidence="1">Large ribosomal subunit protein uL3</fullName>
    </recommendedName>
    <alternativeName>
        <fullName>50S ribosomal protein L3</fullName>
    </alternativeName>
</protein>
<organism>
    <name type="scientific">Pyrococcus furiosus (strain ATCC 43587 / DSM 3638 / JCM 8422 / Vc1)</name>
    <dbReference type="NCBI Taxonomy" id="186497"/>
    <lineage>
        <taxon>Archaea</taxon>
        <taxon>Methanobacteriati</taxon>
        <taxon>Methanobacteriota</taxon>
        <taxon>Thermococci</taxon>
        <taxon>Thermococcales</taxon>
        <taxon>Thermococcaceae</taxon>
        <taxon>Pyrococcus</taxon>
    </lineage>
</organism>
<dbReference type="EMBL" id="AE009950">
    <property type="protein sequence ID" value="AAL81949.1"/>
    <property type="molecule type" value="Genomic_DNA"/>
</dbReference>
<dbReference type="RefSeq" id="WP_011012966.1">
    <property type="nucleotide sequence ID" value="NZ_CP023154.1"/>
</dbReference>
<dbReference type="PDB" id="4V4N">
    <property type="method" value="EM"/>
    <property type="resolution" value="9.00 A"/>
    <property type="chains" value="C=1-365"/>
</dbReference>
<dbReference type="PDB" id="4V6U">
    <property type="method" value="EM"/>
    <property type="resolution" value="6.60 A"/>
    <property type="chains" value="BC=1-365"/>
</dbReference>
<dbReference type="PDBsum" id="4V4N"/>
<dbReference type="PDBsum" id="4V6U"/>
<dbReference type="SMR" id="Q8TZZ8"/>
<dbReference type="STRING" id="186497.PF1825"/>
<dbReference type="PaxDb" id="186497-PF1825"/>
<dbReference type="KEGG" id="pfu:PF1825"/>
<dbReference type="PATRIC" id="fig|186497.12.peg.1896"/>
<dbReference type="eggNOG" id="arCOG04070">
    <property type="taxonomic scope" value="Archaea"/>
</dbReference>
<dbReference type="HOGENOM" id="CLU_033361_2_0_2"/>
<dbReference type="OrthoDB" id="6121at2157"/>
<dbReference type="PhylomeDB" id="Q8TZZ8"/>
<dbReference type="Proteomes" id="UP000001013">
    <property type="component" value="Chromosome"/>
</dbReference>
<dbReference type="GO" id="GO:0022625">
    <property type="term" value="C:cytosolic large ribosomal subunit"/>
    <property type="evidence" value="ECO:0007669"/>
    <property type="project" value="TreeGrafter"/>
</dbReference>
<dbReference type="GO" id="GO:0019843">
    <property type="term" value="F:rRNA binding"/>
    <property type="evidence" value="ECO:0007669"/>
    <property type="project" value="UniProtKB-UniRule"/>
</dbReference>
<dbReference type="GO" id="GO:0003735">
    <property type="term" value="F:structural constituent of ribosome"/>
    <property type="evidence" value="ECO:0007669"/>
    <property type="project" value="InterPro"/>
</dbReference>
<dbReference type="GO" id="GO:0006412">
    <property type="term" value="P:translation"/>
    <property type="evidence" value="ECO:0007669"/>
    <property type="project" value="UniProtKB-UniRule"/>
</dbReference>
<dbReference type="Gene3D" id="3.30.1430.10">
    <property type="match status" value="1"/>
</dbReference>
<dbReference type="Gene3D" id="4.10.960.10">
    <property type="entry name" value="Ribosomal protein L3, domain 3"/>
    <property type="match status" value="1"/>
</dbReference>
<dbReference type="Gene3D" id="2.40.30.10">
    <property type="entry name" value="Translation factors"/>
    <property type="match status" value="1"/>
</dbReference>
<dbReference type="HAMAP" id="MF_01325_A">
    <property type="entry name" value="Ribosomal_uL3_A"/>
    <property type="match status" value="1"/>
</dbReference>
<dbReference type="InterPro" id="IPR045077">
    <property type="entry name" value="L3_arc_euk"/>
</dbReference>
<dbReference type="InterPro" id="IPR044892">
    <property type="entry name" value="Ribosomal_L3_dom_3_arc_sf"/>
</dbReference>
<dbReference type="InterPro" id="IPR000597">
    <property type="entry name" value="Ribosomal_uL3"/>
</dbReference>
<dbReference type="InterPro" id="IPR019928">
    <property type="entry name" value="Ribosomal_uL3_arc"/>
</dbReference>
<dbReference type="InterPro" id="IPR019926">
    <property type="entry name" value="Ribosomal_uL3_CS"/>
</dbReference>
<dbReference type="InterPro" id="IPR009000">
    <property type="entry name" value="Transl_B-barrel_sf"/>
</dbReference>
<dbReference type="NCBIfam" id="TIGR03626">
    <property type="entry name" value="L3_arch"/>
    <property type="match status" value="1"/>
</dbReference>
<dbReference type="NCBIfam" id="NF003261">
    <property type="entry name" value="PRK04231.1"/>
    <property type="match status" value="1"/>
</dbReference>
<dbReference type="PANTHER" id="PTHR11363">
    <property type="entry name" value="60S RIBOSOMAL PROTEIN L3-RELATED"/>
    <property type="match status" value="1"/>
</dbReference>
<dbReference type="PANTHER" id="PTHR11363:SF5">
    <property type="entry name" value="LARGE RIBOSOMAL SUBUNIT PROTEIN UL3"/>
    <property type="match status" value="1"/>
</dbReference>
<dbReference type="Pfam" id="PF00297">
    <property type="entry name" value="Ribosomal_L3"/>
    <property type="match status" value="1"/>
</dbReference>
<dbReference type="SUPFAM" id="SSF50447">
    <property type="entry name" value="Translation proteins"/>
    <property type="match status" value="1"/>
</dbReference>
<dbReference type="PROSITE" id="PS00474">
    <property type="entry name" value="RIBOSOMAL_L3"/>
    <property type="match status" value="1"/>
</dbReference>